<organism>
    <name type="scientific">Synechocystis sp. (strain ATCC 27184 / PCC 6803 / Kazusa)</name>
    <dbReference type="NCBI Taxonomy" id="1111708"/>
    <lineage>
        <taxon>Bacteria</taxon>
        <taxon>Bacillati</taxon>
        <taxon>Cyanobacteriota</taxon>
        <taxon>Cyanophyceae</taxon>
        <taxon>Synechococcales</taxon>
        <taxon>Merismopediaceae</taxon>
        <taxon>Synechocystis</taxon>
    </lineage>
</organism>
<proteinExistence type="inferred from homology"/>
<reference key="1">
    <citation type="journal article" date="1996" name="DNA Res.">
        <title>Sequence analysis of the genome of the unicellular cyanobacterium Synechocystis sp. strain PCC6803. II. Sequence determination of the entire genome and assignment of potential protein-coding regions.</title>
        <authorList>
            <person name="Kaneko T."/>
            <person name="Sato S."/>
            <person name="Kotani H."/>
            <person name="Tanaka A."/>
            <person name="Asamizu E."/>
            <person name="Nakamura Y."/>
            <person name="Miyajima N."/>
            <person name="Hirosawa M."/>
            <person name="Sugiura M."/>
            <person name="Sasamoto S."/>
            <person name="Kimura T."/>
            <person name="Hosouchi T."/>
            <person name="Matsuno A."/>
            <person name="Muraki A."/>
            <person name="Nakazaki N."/>
            <person name="Naruo K."/>
            <person name="Okumura S."/>
            <person name="Shimpo S."/>
            <person name="Takeuchi C."/>
            <person name="Wada T."/>
            <person name="Watanabe A."/>
            <person name="Yamada M."/>
            <person name="Yasuda M."/>
            <person name="Tabata S."/>
        </authorList>
    </citation>
    <scope>NUCLEOTIDE SEQUENCE [LARGE SCALE GENOMIC DNA]</scope>
    <source>
        <strain>ATCC 27184 / PCC 6803 / Kazusa</strain>
    </source>
</reference>
<protein>
    <recommendedName>
        <fullName evidence="1">Enolase</fullName>
        <ecNumber evidence="1">4.2.1.11</ecNumber>
    </recommendedName>
    <alternativeName>
        <fullName evidence="1">2-phospho-D-glycerate hydro-lyase</fullName>
    </alternativeName>
    <alternativeName>
        <fullName evidence="1">2-phosphoglycerate dehydratase</fullName>
    </alternativeName>
</protein>
<gene>
    <name evidence="1" type="primary">eno</name>
    <name type="ordered locus">slr0752</name>
</gene>
<feature type="chain" id="PRO_0000133993" description="Enolase">
    <location>
        <begin position="1"/>
        <end position="432"/>
    </location>
</feature>
<feature type="region of interest" description="Disordered" evidence="2">
    <location>
        <begin position="41"/>
        <end position="64"/>
    </location>
</feature>
<feature type="compositionally biased region" description="Basic and acidic residues" evidence="2">
    <location>
        <begin position="52"/>
        <end position="64"/>
    </location>
</feature>
<feature type="active site" description="Proton donor" evidence="1">
    <location>
        <position position="211"/>
    </location>
</feature>
<feature type="active site" description="Proton acceptor" evidence="1">
    <location>
        <position position="341"/>
    </location>
</feature>
<feature type="binding site" evidence="1">
    <location>
        <position position="168"/>
    </location>
    <ligand>
        <name>(2R)-2-phosphoglycerate</name>
        <dbReference type="ChEBI" id="CHEBI:58289"/>
    </ligand>
</feature>
<feature type="binding site" evidence="1">
    <location>
        <position position="248"/>
    </location>
    <ligand>
        <name>Mg(2+)</name>
        <dbReference type="ChEBI" id="CHEBI:18420"/>
    </ligand>
</feature>
<feature type="binding site" evidence="1">
    <location>
        <position position="289"/>
    </location>
    <ligand>
        <name>Mg(2+)</name>
        <dbReference type="ChEBI" id="CHEBI:18420"/>
    </ligand>
</feature>
<feature type="binding site" evidence="1">
    <location>
        <position position="316"/>
    </location>
    <ligand>
        <name>Mg(2+)</name>
        <dbReference type="ChEBI" id="CHEBI:18420"/>
    </ligand>
</feature>
<feature type="binding site" evidence="1">
    <location>
        <position position="341"/>
    </location>
    <ligand>
        <name>(2R)-2-phosphoglycerate</name>
        <dbReference type="ChEBI" id="CHEBI:58289"/>
    </ligand>
</feature>
<feature type="binding site" evidence="1">
    <location>
        <position position="370"/>
    </location>
    <ligand>
        <name>(2R)-2-phosphoglycerate</name>
        <dbReference type="ChEBI" id="CHEBI:58289"/>
    </ligand>
</feature>
<feature type="binding site" evidence="1">
    <location>
        <position position="371"/>
    </location>
    <ligand>
        <name>(2R)-2-phosphoglycerate</name>
        <dbReference type="ChEBI" id="CHEBI:58289"/>
    </ligand>
</feature>
<feature type="binding site" evidence="1">
    <location>
        <position position="392"/>
    </location>
    <ligand>
        <name>(2R)-2-phosphoglycerate</name>
        <dbReference type="ChEBI" id="CHEBI:58289"/>
    </ligand>
</feature>
<comment type="function">
    <text evidence="1">Catalyzes the reversible conversion of 2-phosphoglycerate (2-PG) into phosphoenolpyruvate (PEP). It is essential for the degradation of carbohydrates via glycolysis.</text>
</comment>
<comment type="catalytic activity">
    <reaction evidence="1">
        <text>(2R)-2-phosphoglycerate = phosphoenolpyruvate + H2O</text>
        <dbReference type="Rhea" id="RHEA:10164"/>
        <dbReference type="ChEBI" id="CHEBI:15377"/>
        <dbReference type="ChEBI" id="CHEBI:58289"/>
        <dbReference type="ChEBI" id="CHEBI:58702"/>
        <dbReference type="EC" id="4.2.1.11"/>
    </reaction>
</comment>
<comment type="cofactor">
    <cofactor evidence="1">
        <name>Mg(2+)</name>
        <dbReference type="ChEBI" id="CHEBI:18420"/>
    </cofactor>
    <text evidence="1">Binds a second Mg(2+) ion via substrate during catalysis.</text>
</comment>
<comment type="pathway">
    <text evidence="1">Carbohydrate degradation; glycolysis; pyruvate from D-glyceraldehyde 3-phosphate: step 4/5.</text>
</comment>
<comment type="subcellular location">
    <subcellularLocation>
        <location evidence="1">Cytoplasm</location>
    </subcellularLocation>
    <subcellularLocation>
        <location evidence="1">Secreted</location>
    </subcellularLocation>
    <subcellularLocation>
        <location evidence="1">Cell surface</location>
    </subcellularLocation>
    <text evidence="1">Fractions of enolase are present in both the cytoplasm and on the cell surface.</text>
</comment>
<comment type="similarity">
    <text evidence="1">Belongs to the enolase family.</text>
</comment>
<keyword id="KW-0963">Cytoplasm</keyword>
<keyword id="KW-0324">Glycolysis</keyword>
<keyword id="KW-0456">Lyase</keyword>
<keyword id="KW-0460">Magnesium</keyword>
<keyword id="KW-0479">Metal-binding</keyword>
<keyword id="KW-1185">Reference proteome</keyword>
<keyword id="KW-0964">Secreted</keyword>
<sequence>MLSKVPATIEEIAAREILDSRGRPTIEAEVRLESGAHGIAQVPSGASTGSFEAHELRDGDPKRYDGKGVEKAVRNVTEKIAPVVEGLDAFDQMAVDQAMIDRDGTDNKKELGANAILGVSLATAKAAAAELAIPLYRYLGGPLANVLPVPMMNVINGGAHADNNVDFQEFMIMPVGAETFKEALRWGAEVFAVLGKVLKERKLLSGGVGDEGGYAPNLTSNQQALDILIEAIEQAGYKPGSQIALAMDIAASEFFKNGQYEYDGGSHSPQEFIDYQAKLVSQYPIVSIEDGLHEDDWESWKGLTTSLGTKTQLVGDDLMVTNPVRLQKSIDLGVANAILIKLNQIGTLSETLETISLATRHSYRSVISHRSGETEDTTIADLAVATRVGQIKTGSLCRSERVAKYNRLLRIEDELGDRAVYAPKIGLGPKHS</sequence>
<dbReference type="EC" id="4.2.1.11" evidence="1"/>
<dbReference type="EMBL" id="BA000022">
    <property type="protein sequence ID" value="BAA18749.1"/>
    <property type="molecule type" value="Genomic_DNA"/>
</dbReference>
<dbReference type="PIR" id="S76837">
    <property type="entry name" value="S76837"/>
</dbReference>
<dbReference type="SMR" id="P77972"/>
<dbReference type="FunCoup" id="P77972">
    <property type="interactions" value="335"/>
</dbReference>
<dbReference type="STRING" id="1148.gene:10500521"/>
<dbReference type="PaxDb" id="1148-1653839"/>
<dbReference type="EnsemblBacteria" id="BAA18749">
    <property type="protein sequence ID" value="BAA18749"/>
    <property type="gene ID" value="BAA18749"/>
</dbReference>
<dbReference type="KEGG" id="syn:slr0752"/>
<dbReference type="eggNOG" id="COG0148">
    <property type="taxonomic scope" value="Bacteria"/>
</dbReference>
<dbReference type="InParanoid" id="P77972"/>
<dbReference type="PhylomeDB" id="P77972"/>
<dbReference type="UniPathway" id="UPA00109">
    <property type="reaction ID" value="UER00187"/>
</dbReference>
<dbReference type="Proteomes" id="UP000001425">
    <property type="component" value="Chromosome"/>
</dbReference>
<dbReference type="GO" id="GO:0009986">
    <property type="term" value="C:cell surface"/>
    <property type="evidence" value="ECO:0007669"/>
    <property type="project" value="UniProtKB-SubCell"/>
</dbReference>
<dbReference type="GO" id="GO:0005576">
    <property type="term" value="C:extracellular region"/>
    <property type="evidence" value="ECO:0007669"/>
    <property type="project" value="UniProtKB-SubCell"/>
</dbReference>
<dbReference type="GO" id="GO:0000015">
    <property type="term" value="C:phosphopyruvate hydratase complex"/>
    <property type="evidence" value="ECO:0000318"/>
    <property type="project" value="GO_Central"/>
</dbReference>
<dbReference type="GO" id="GO:0000287">
    <property type="term" value="F:magnesium ion binding"/>
    <property type="evidence" value="ECO:0007669"/>
    <property type="project" value="UniProtKB-UniRule"/>
</dbReference>
<dbReference type="GO" id="GO:0004634">
    <property type="term" value="F:phosphopyruvate hydratase activity"/>
    <property type="evidence" value="ECO:0000318"/>
    <property type="project" value="GO_Central"/>
</dbReference>
<dbReference type="GO" id="GO:0006096">
    <property type="term" value="P:glycolytic process"/>
    <property type="evidence" value="ECO:0000318"/>
    <property type="project" value="GO_Central"/>
</dbReference>
<dbReference type="CDD" id="cd03313">
    <property type="entry name" value="enolase"/>
    <property type="match status" value="1"/>
</dbReference>
<dbReference type="FunFam" id="3.30.390.10:FF:000001">
    <property type="entry name" value="Enolase"/>
    <property type="match status" value="1"/>
</dbReference>
<dbReference type="Gene3D" id="3.20.20.120">
    <property type="entry name" value="Enolase-like C-terminal domain"/>
    <property type="match status" value="1"/>
</dbReference>
<dbReference type="Gene3D" id="3.30.390.10">
    <property type="entry name" value="Enolase-like, N-terminal domain"/>
    <property type="match status" value="1"/>
</dbReference>
<dbReference type="HAMAP" id="MF_00318">
    <property type="entry name" value="Enolase"/>
    <property type="match status" value="1"/>
</dbReference>
<dbReference type="InterPro" id="IPR000941">
    <property type="entry name" value="Enolase"/>
</dbReference>
<dbReference type="InterPro" id="IPR036849">
    <property type="entry name" value="Enolase-like_C_sf"/>
</dbReference>
<dbReference type="InterPro" id="IPR029017">
    <property type="entry name" value="Enolase-like_N"/>
</dbReference>
<dbReference type="InterPro" id="IPR020810">
    <property type="entry name" value="Enolase_C"/>
</dbReference>
<dbReference type="InterPro" id="IPR020809">
    <property type="entry name" value="Enolase_CS"/>
</dbReference>
<dbReference type="InterPro" id="IPR020811">
    <property type="entry name" value="Enolase_N"/>
</dbReference>
<dbReference type="NCBIfam" id="TIGR01060">
    <property type="entry name" value="eno"/>
    <property type="match status" value="1"/>
</dbReference>
<dbReference type="PANTHER" id="PTHR11902">
    <property type="entry name" value="ENOLASE"/>
    <property type="match status" value="1"/>
</dbReference>
<dbReference type="PANTHER" id="PTHR11902:SF1">
    <property type="entry name" value="ENOLASE"/>
    <property type="match status" value="1"/>
</dbReference>
<dbReference type="Pfam" id="PF00113">
    <property type="entry name" value="Enolase_C"/>
    <property type="match status" value="1"/>
</dbReference>
<dbReference type="Pfam" id="PF03952">
    <property type="entry name" value="Enolase_N"/>
    <property type="match status" value="1"/>
</dbReference>
<dbReference type="PIRSF" id="PIRSF001400">
    <property type="entry name" value="Enolase"/>
    <property type="match status" value="1"/>
</dbReference>
<dbReference type="PRINTS" id="PR00148">
    <property type="entry name" value="ENOLASE"/>
</dbReference>
<dbReference type="SFLD" id="SFLDS00001">
    <property type="entry name" value="Enolase"/>
    <property type="match status" value="1"/>
</dbReference>
<dbReference type="SFLD" id="SFLDF00002">
    <property type="entry name" value="enolase"/>
    <property type="match status" value="1"/>
</dbReference>
<dbReference type="SMART" id="SM01192">
    <property type="entry name" value="Enolase_C"/>
    <property type="match status" value="1"/>
</dbReference>
<dbReference type="SMART" id="SM01193">
    <property type="entry name" value="Enolase_N"/>
    <property type="match status" value="1"/>
</dbReference>
<dbReference type="SUPFAM" id="SSF51604">
    <property type="entry name" value="Enolase C-terminal domain-like"/>
    <property type="match status" value="1"/>
</dbReference>
<dbReference type="SUPFAM" id="SSF54826">
    <property type="entry name" value="Enolase N-terminal domain-like"/>
    <property type="match status" value="1"/>
</dbReference>
<dbReference type="PROSITE" id="PS00164">
    <property type="entry name" value="ENOLASE"/>
    <property type="match status" value="1"/>
</dbReference>
<accession>P77972</accession>
<name>ENO_SYNY3</name>
<evidence type="ECO:0000255" key="1">
    <source>
        <dbReference type="HAMAP-Rule" id="MF_00318"/>
    </source>
</evidence>
<evidence type="ECO:0000256" key="2">
    <source>
        <dbReference type="SAM" id="MobiDB-lite"/>
    </source>
</evidence>